<dbReference type="EMBL" id="U59742">
    <property type="protein sequence ID" value="AAB03186.1"/>
    <property type="molecule type" value="Genomic_DNA"/>
</dbReference>
<dbReference type="EMBL" id="Z72847">
    <property type="protein sequence ID" value="CAA97064.1"/>
    <property type="molecule type" value="Genomic_DNA"/>
</dbReference>
<dbReference type="EMBL" id="BK006941">
    <property type="protein sequence ID" value="DAA08158.1"/>
    <property type="molecule type" value="Genomic_DNA"/>
</dbReference>
<dbReference type="PIR" id="S64357">
    <property type="entry name" value="S64357"/>
</dbReference>
<dbReference type="RefSeq" id="NP_011576.1">
    <property type="nucleotide sequence ID" value="NM_001181191.1"/>
</dbReference>
<dbReference type="BioGRID" id="33307">
    <property type="interactions" value="104"/>
</dbReference>
<dbReference type="DIP" id="DIP-5161N"/>
<dbReference type="FunCoup" id="P53239">
    <property type="interactions" value="93"/>
</dbReference>
<dbReference type="IntAct" id="P53239">
    <property type="interactions" value="3"/>
</dbReference>
<dbReference type="MINT" id="P53239"/>
<dbReference type="STRING" id="4932.YGR062C"/>
<dbReference type="TCDB" id="2.A.9.4.1">
    <property type="family name" value="the membrane protein insertase (yidc/alb3/oxa1) family"/>
</dbReference>
<dbReference type="GlyGen" id="P53239">
    <property type="glycosylation" value="1 site"/>
</dbReference>
<dbReference type="PaxDb" id="4932-YGR062C"/>
<dbReference type="PeptideAtlas" id="P53239"/>
<dbReference type="EnsemblFungi" id="YGR062C_mRNA">
    <property type="protein sequence ID" value="YGR062C"/>
    <property type="gene ID" value="YGR062C"/>
</dbReference>
<dbReference type="GeneID" id="852953"/>
<dbReference type="KEGG" id="sce:YGR062C"/>
<dbReference type="AGR" id="SGD:S000003294"/>
<dbReference type="SGD" id="S000003294">
    <property type="gene designation" value="COX18"/>
</dbReference>
<dbReference type="VEuPathDB" id="FungiDB:YGR062C"/>
<dbReference type="eggNOG" id="KOG1239">
    <property type="taxonomic scope" value="Eukaryota"/>
</dbReference>
<dbReference type="GeneTree" id="ENSGT00530000063506"/>
<dbReference type="HOGENOM" id="CLU_029282_2_1_1"/>
<dbReference type="InParanoid" id="P53239"/>
<dbReference type="OMA" id="WQRKRIV"/>
<dbReference type="OrthoDB" id="2148490at2759"/>
<dbReference type="BioCyc" id="YEAST:G3O-30777-MONOMER"/>
<dbReference type="BioGRID-ORCS" id="852953">
    <property type="hits" value="1 hit in 10 CRISPR screens"/>
</dbReference>
<dbReference type="PRO" id="PR:P53239"/>
<dbReference type="Proteomes" id="UP000002311">
    <property type="component" value="Chromosome VII"/>
</dbReference>
<dbReference type="RNAct" id="P53239">
    <property type="molecule type" value="protein"/>
</dbReference>
<dbReference type="GO" id="GO:0005743">
    <property type="term" value="C:mitochondrial inner membrane"/>
    <property type="evidence" value="ECO:0000314"/>
    <property type="project" value="SGD"/>
</dbReference>
<dbReference type="GO" id="GO:0032977">
    <property type="term" value="F:membrane insertase activity"/>
    <property type="evidence" value="ECO:0000315"/>
    <property type="project" value="SGD"/>
</dbReference>
<dbReference type="GO" id="GO:0033617">
    <property type="term" value="P:mitochondrial cytochrome c oxidase assembly"/>
    <property type="evidence" value="ECO:0000318"/>
    <property type="project" value="GO_Central"/>
</dbReference>
<dbReference type="GO" id="GO:0032979">
    <property type="term" value="P:protein insertion into mitochondrial inner membrane from matrix"/>
    <property type="evidence" value="ECO:0000315"/>
    <property type="project" value="SGD"/>
</dbReference>
<dbReference type="CDD" id="cd20069">
    <property type="entry name" value="5TM_Oxa1-like"/>
    <property type="match status" value="1"/>
</dbReference>
<dbReference type="InterPro" id="IPR001708">
    <property type="entry name" value="YidC/ALB3/OXA1/COX18"/>
</dbReference>
<dbReference type="PANTHER" id="PTHR12428:SF65">
    <property type="entry name" value="CYTOCHROME C OXIDASE ASSEMBLY PROTEIN COX18, MITOCHONDRIAL"/>
    <property type="match status" value="1"/>
</dbReference>
<dbReference type="PANTHER" id="PTHR12428">
    <property type="entry name" value="OXA1"/>
    <property type="match status" value="1"/>
</dbReference>
<gene>
    <name type="primary">COX18</name>
    <name type="ordered locus">YGR062C</name>
    <name type="ORF">G4532</name>
</gene>
<proteinExistence type="evidence at protein level"/>
<sequence length="316" mass="35650">MLKRLANRQNGFASFSCSSVGLRYGRTNPSTKRSFSLFQSVADTFLTVHEASHIPWIVLVPLTTMTLRTLVTLPFSIWQRRRILKQQELRKLVQPITPIIKLRLAAVTNKKSRNAARISSNGSFMPLQLQNAGVLTPEQITLLAVKETRKRQKKLFKKYNVPLWKNALLPMVQIPLWVTVSMGIRTLTETQLIESFYPSWFSALGFSSFDLSSPLVAMPLLAPILVGTLAVLNVELNGRLMFSSSLSSQGIKTISRNSTRVQEAMTSILNVSRLGCVVMLAMSSQAPFLLSLYWISSQLFSLVQNIILNWIYPYQR</sequence>
<reference key="1">
    <citation type="journal article" date="2000" name="J. Biol. Chem.">
        <title>Cloning and characterization of COX18, a Saccharomyces cerevisiae PET gene required for the assembly of cytochrome oxidase.</title>
        <authorList>
            <person name="Souza R.L."/>
            <person name="Green-Willms N.S."/>
            <person name="Fox T.D."/>
            <person name="Tzagoloff A."/>
            <person name="Nobrega F.G."/>
        </authorList>
    </citation>
    <scope>NUCLEOTIDE SEQUENCE [GENOMIC DNA]</scope>
    <scope>SUBCELLULAR LOCATION</scope>
</reference>
<reference key="2">
    <citation type="journal article" date="1997" name="Nature">
        <title>The nucleotide sequence of Saccharomyces cerevisiae chromosome VII.</title>
        <authorList>
            <person name="Tettelin H."/>
            <person name="Agostoni-Carbone M.L."/>
            <person name="Albermann K."/>
            <person name="Albers M."/>
            <person name="Arroyo J."/>
            <person name="Backes U."/>
            <person name="Barreiros T."/>
            <person name="Bertani I."/>
            <person name="Bjourson A.J."/>
            <person name="Brueckner M."/>
            <person name="Bruschi C.V."/>
            <person name="Carignani G."/>
            <person name="Castagnoli L."/>
            <person name="Cerdan E."/>
            <person name="Clemente M.L."/>
            <person name="Coblenz A."/>
            <person name="Coglievina M."/>
            <person name="Coissac E."/>
            <person name="Defoor E."/>
            <person name="Del Bino S."/>
            <person name="Delius H."/>
            <person name="Delneri D."/>
            <person name="de Wergifosse P."/>
            <person name="Dujon B."/>
            <person name="Durand P."/>
            <person name="Entian K.-D."/>
            <person name="Eraso P."/>
            <person name="Escribano V."/>
            <person name="Fabiani L."/>
            <person name="Fartmann B."/>
            <person name="Feroli F."/>
            <person name="Feuermann M."/>
            <person name="Frontali L."/>
            <person name="Garcia-Gonzalez M."/>
            <person name="Garcia-Saez M.I."/>
            <person name="Goffeau A."/>
            <person name="Guerreiro P."/>
            <person name="Hani J."/>
            <person name="Hansen M."/>
            <person name="Hebling U."/>
            <person name="Hernandez K."/>
            <person name="Heumann K."/>
            <person name="Hilger F."/>
            <person name="Hofmann B."/>
            <person name="Indge K.J."/>
            <person name="James C.M."/>
            <person name="Klima R."/>
            <person name="Koetter P."/>
            <person name="Kramer B."/>
            <person name="Kramer W."/>
            <person name="Lauquin G."/>
            <person name="Leuther H."/>
            <person name="Louis E.J."/>
            <person name="Maillier E."/>
            <person name="Marconi A."/>
            <person name="Martegani E."/>
            <person name="Mazon M.J."/>
            <person name="Mazzoni C."/>
            <person name="McReynolds A.D.K."/>
            <person name="Melchioretto P."/>
            <person name="Mewes H.-W."/>
            <person name="Minenkova O."/>
            <person name="Mueller-Auer S."/>
            <person name="Nawrocki A."/>
            <person name="Netter P."/>
            <person name="Neu R."/>
            <person name="Nombela C."/>
            <person name="Oliver S.G."/>
            <person name="Panzeri L."/>
            <person name="Paoluzi S."/>
            <person name="Plevani P."/>
            <person name="Portetelle D."/>
            <person name="Portillo F."/>
            <person name="Potier S."/>
            <person name="Purnelle B."/>
            <person name="Rieger M."/>
            <person name="Riles L."/>
            <person name="Rinaldi T."/>
            <person name="Robben J."/>
            <person name="Rodrigues-Pousada C."/>
            <person name="Rodriguez-Belmonte E."/>
            <person name="Rodriguez-Torres A.M."/>
            <person name="Rose M."/>
            <person name="Ruzzi M."/>
            <person name="Saliola M."/>
            <person name="Sanchez-Perez M."/>
            <person name="Schaefer B."/>
            <person name="Schaefer M."/>
            <person name="Scharfe M."/>
            <person name="Schmidheini T."/>
            <person name="Schreer A."/>
            <person name="Skala J."/>
            <person name="Souciet J.-L."/>
            <person name="Steensma H.Y."/>
            <person name="Talla E."/>
            <person name="Thierry A."/>
            <person name="Vandenbol M."/>
            <person name="van der Aart Q.J.M."/>
            <person name="Van Dyck L."/>
            <person name="Vanoni M."/>
            <person name="Verhasselt P."/>
            <person name="Voet M."/>
            <person name="Volckaert G."/>
            <person name="Wambutt R."/>
            <person name="Watson M.D."/>
            <person name="Weber N."/>
            <person name="Wedler E."/>
            <person name="Wedler H."/>
            <person name="Wipfli P."/>
            <person name="Wolf K."/>
            <person name="Wright L.F."/>
            <person name="Zaccaria P."/>
            <person name="Zimmermann M."/>
            <person name="Zollner A."/>
            <person name="Kleine K."/>
        </authorList>
    </citation>
    <scope>NUCLEOTIDE SEQUENCE [LARGE SCALE GENOMIC DNA]</scope>
    <source>
        <strain>ATCC 204508 / S288c</strain>
    </source>
</reference>
<reference key="3">
    <citation type="journal article" date="2014" name="G3 (Bethesda)">
        <title>The reference genome sequence of Saccharomyces cerevisiae: Then and now.</title>
        <authorList>
            <person name="Engel S.R."/>
            <person name="Dietrich F.S."/>
            <person name="Fisk D.G."/>
            <person name="Binkley G."/>
            <person name="Balakrishnan R."/>
            <person name="Costanzo M.C."/>
            <person name="Dwight S.S."/>
            <person name="Hitz B.C."/>
            <person name="Karra K."/>
            <person name="Nash R.S."/>
            <person name="Weng S."/>
            <person name="Wong E.D."/>
            <person name="Lloyd P."/>
            <person name="Skrzypek M.S."/>
            <person name="Miyasato S.R."/>
            <person name="Simison M."/>
            <person name="Cherry J.M."/>
        </authorList>
    </citation>
    <scope>GENOME REANNOTATION</scope>
    <source>
        <strain>ATCC 204508 / S288c</strain>
    </source>
</reference>
<reference key="4">
    <citation type="journal article" date="2002" name="Mol. Biol. Cell">
        <title>Cox18p is required for export of the mitochondrially encoded Saccharomyces cerevisiae Cox2p C-tail and interacts with Pnt1p and Mss2p in the inner membrane.</title>
        <authorList>
            <person name="Saracco S.A."/>
            <person name="Fox T.D."/>
        </authorList>
    </citation>
    <scope>FUNCTION</scope>
    <scope>INTERACTION WITH PNT1 AND MSS2</scope>
</reference>
<reference key="5">
    <citation type="journal article" date="2003" name="Nature">
        <title>Global analysis of protein expression in yeast.</title>
        <authorList>
            <person name="Ghaemmaghami S."/>
            <person name="Huh W.-K."/>
            <person name="Bower K."/>
            <person name="Howson R.W."/>
            <person name="Belle A."/>
            <person name="Dephoure N."/>
            <person name="O'Shea E.K."/>
            <person name="Weissman J.S."/>
        </authorList>
    </citation>
    <scope>LEVEL OF PROTEIN EXPRESSION [LARGE SCALE ANALYSIS]</scope>
</reference>
<keyword id="KW-0472">Membrane</keyword>
<keyword id="KW-0496">Mitochondrion</keyword>
<keyword id="KW-0999">Mitochondrion inner membrane</keyword>
<keyword id="KW-1185">Reference proteome</keyword>
<keyword id="KW-0809">Transit peptide</keyword>
<keyword id="KW-0812">Transmembrane</keyword>
<keyword id="KW-1133">Transmembrane helix</keyword>
<evidence type="ECO:0000255" key="1"/>
<evidence type="ECO:0000269" key="2">
    <source>
    </source>
</evidence>
<evidence type="ECO:0000269" key="3">
    <source>
    </source>
</evidence>
<evidence type="ECO:0000269" key="4">
    <source>
    </source>
</evidence>
<evidence type="ECO:0000305" key="5"/>
<feature type="transit peptide" description="Mitochondrion" evidence="1">
    <location>
        <begin position="1"/>
        <end status="unknown"/>
    </location>
</feature>
<feature type="chain" id="PRO_0000020357" description="Cytochrome c oxidase assembly protein COX18, mitochondrial">
    <location>
        <begin status="unknown"/>
        <end position="316"/>
    </location>
</feature>
<feature type="topological domain" description="Mitochondrial intermembrane" evidence="5">
    <location>
        <begin status="unknown"/>
        <end position="163"/>
    </location>
</feature>
<feature type="transmembrane region" description="Helical" evidence="1">
    <location>
        <begin position="164"/>
        <end position="184"/>
    </location>
</feature>
<feature type="topological domain" description="Mitochondrial matrix" evidence="5">
    <location>
        <begin position="185"/>
        <end position="213"/>
    </location>
</feature>
<feature type="transmembrane region" description="Helical" evidence="1">
    <location>
        <begin position="214"/>
        <end position="234"/>
    </location>
</feature>
<feature type="topological domain" description="Mitochondrial intermembrane" evidence="5">
    <location>
        <begin position="235"/>
        <end position="274"/>
    </location>
</feature>
<feature type="transmembrane region" description="Helical" evidence="1">
    <location>
        <begin position="275"/>
        <end position="295"/>
    </location>
</feature>
<feature type="topological domain" description="Mitochondrial matrix" evidence="5">
    <location>
        <begin position="296"/>
        <end position="316"/>
    </location>
</feature>
<organism>
    <name type="scientific">Saccharomyces cerevisiae (strain ATCC 204508 / S288c)</name>
    <name type="common">Baker's yeast</name>
    <dbReference type="NCBI Taxonomy" id="559292"/>
    <lineage>
        <taxon>Eukaryota</taxon>
        <taxon>Fungi</taxon>
        <taxon>Dikarya</taxon>
        <taxon>Ascomycota</taxon>
        <taxon>Saccharomycotina</taxon>
        <taxon>Saccharomycetes</taxon>
        <taxon>Saccharomycetales</taxon>
        <taxon>Saccharomycetaceae</taxon>
        <taxon>Saccharomyces</taxon>
    </lineage>
</organism>
<accession>P53239</accession>
<accession>D6VUJ7</accession>
<name>COX18_YEAST</name>
<protein>
    <recommendedName>
        <fullName>Cytochrome c oxidase assembly protein COX18, mitochondrial</fullName>
    </recommendedName>
    <alternativeName>
        <fullName>Cytochrome c oxidase assembly protein 18</fullName>
    </alternativeName>
</protein>
<comment type="function">
    <text evidence="3">Required for the insertion of integral membrane proteins into the mitochondrial inner membrane. Essential for the activity and assembly of cytochrome c oxidase. Plays a central role in the translocation and export of the C-terminal part of the COX2 protein into the mitochondrial intermembrane space.</text>
</comment>
<comment type="subunit">
    <text evidence="3">Interacts with PNT1 and MSS2.</text>
</comment>
<comment type="subcellular location">
    <subcellularLocation>
        <location evidence="2">Mitochondrion inner membrane</location>
        <topology evidence="2">Multi-pass membrane protein</topology>
    </subcellularLocation>
</comment>
<comment type="miscellaneous">
    <text evidence="4">Present with 468 molecules/cell in log phase SD medium.</text>
</comment>
<comment type="similarity">
    <text evidence="5">Belongs to the OXA1/ALB3/YidC family.</text>
</comment>